<accession>A2BW38</accession>
<gene>
    <name type="ordered locus">P9515_07901</name>
</gene>
<name>YQGF_PROM5</name>
<protein>
    <recommendedName>
        <fullName evidence="1">Putative pre-16S rRNA nuclease</fullName>
        <ecNumber evidence="1">3.1.-.-</ecNumber>
    </recommendedName>
</protein>
<dbReference type="EC" id="3.1.-.-" evidence="1"/>
<dbReference type="EMBL" id="CP000552">
    <property type="protein sequence ID" value="ABM71999.1"/>
    <property type="molecule type" value="Genomic_DNA"/>
</dbReference>
<dbReference type="RefSeq" id="WP_011820104.1">
    <property type="nucleotide sequence ID" value="NC_008817.1"/>
</dbReference>
<dbReference type="SMR" id="A2BW38"/>
<dbReference type="STRING" id="167542.P9515_07901"/>
<dbReference type="GeneID" id="60200786"/>
<dbReference type="KEGG" id="pmc:P9515_07901"/>
<dbReference type="eggNOG" id="COG0816">
    <property type="taxonomic scope" value="Bacteria"/>
</dbReference>
<dbReference type="HOGENOM" id="CLU_098240_3_1_3"/>
<dbReference type="OrthoDB" id="9796140at2"/>
<dbReference type="Proteomes" id="UP000001589">
    <property type="component" value="Chromosome"/>
</dbReference>
<dbReference type="GO" id="GO:0005829">
    <property type="term" value="C:cytosol"/>
    <property type="evidence" value="ECO:0007669"/>
    <property type="project" value="TreeGrafter"/>
</dbReference>
<dbReference type="GO" id="GO:0004518">
    <property type="term" value="F:nuclease activity"/>
    <property type="evidence" value="ECO:0007669"/>
    <property type="project" value="UniProtKB-KW"/>
</dbReference>
<dbReference type="GO" id="GO:0000967">
    <property type="term" value="P:rRNA 5'-end processing"/>
    <property type="evidence" value="ECO:0007669"/>
    <property type="project" value="UniProtKB-UniRule"/>
</dbReference>
<dbReference type="CDD" id="cd16964">
    <property type="entry name" value="YqgF"/>
    <property type="match status" value="1"/>
</dbReference>
<dbReference type="Gene3D" id="3.30.420.140">
    <property type="entry name" value="YqgF/RNase H-like domain"/>
    <property type="match status" value="1"/>
</dbReference>
<dbReference type="HAMAP" id="MF_00651">
    <property type="entry name" value="Nuclease_YqgF"/>
    <property type="match status" value="1"/>
</dbReference>
<dbReference type="InterPro" id="IPR012337">
    <property type="entry name" value="RNaseH-like_sf"/>
</dbReference>
<dbReference type="InterPro" id="IPR005227">
    <property type="entry name" value="YqgF"/>
</dbReference>
<dbReference type="InterPro" id="IPR006641">
    <property type="entry name" value="YqgF/RNaseH-like_dom"/>
</dbReference>
<dbReference type="InterPro" id="IPR037027">
    <property type="entry name" value="YqgF/RNaseH-like_dom_sf"/>
</dbReference>
<dbReference type="NCBIfam" id="TIGR00250">
    <property type="entry name" value="RNAse_H_YqgF"/>
    <property type="match status" value="1"/>
</dbReference>
<dbReference type="PANTHER" id="PTHR33317">
    <property type="entry name" value="POLYNUCLEOTIDYL TRANSFERASE, RIBONUCLEASE H-LIKE SUPERFAMILY PROTEIN"/>
    <property type="match status" value="1"/>
</dbReference>
<dbReference type="PANTHER" id="PTHR33317:SF4">
    <property type="entry name" value="POLYNUCLEOTIDYL TRANSFERASE, RIBONUCLEASE H-LIKE SUPERFAMILY PROTEIN"/>
    <property type="match status" value="1"/>
</dbReference>
<dbReference type="Pfam" id="PF03652">
    <property type="entry name" value="RuvX"/>
    <property type="match status" value="1"/>
</dbReference>
<dbReference type="SMART" id="SM00732">
    <property type="entry name" value="YqgFc"/>
    <property type="match status" value="1"/>
</dbReference>
<dbReference type="SUPFAM" id="SSF53098">
    <property type="entry name" value="Ribonuclease H-like"/>
    <property type="match status" value="1"/>
</dbReference>
<reference key="1">
    <citation type="journal article" date="2007" name="PLoS Genet.">
        <title>Patterns and implications of gene gain and loss in the evolution of Prochlorococcus.</title>
        <authorList>
            <person name="Kettler G.C."/>
            <person name="Martiny A.C."/>
            <person name="Huang K."/>
            <person name="Zucker J."/>
            <person name="Coleman M.L."/>
            <person name="Rodrigue S."/>
            <person name="Chen F."/>
            <person name="Lapidus A."/>
            <person name="Ferriera S."/>
            <person name="Johnson J."/>
            <person name="Steglich C."/>
            <person name="Church G.M."/>
            <person name="Richardson P."/>
            <person name="Chisholm S.W."/>
        </authorList>
    </citation>
    <scope>NUCLEOTIDE SEQUENCE [LARGE SCALE GENOMIC DNA]</scope>
    <source>
        <strain>MIT 9515</strain>
    </source>
</reference>
<organism>
    <name type="scientific">Prochlorococcus marinus (strain MIT 9515)</name>
    <dbReference type="NCBI Taxonomy" id="167542"/>
    <lineage>
        <taxon>Bacteria</taxon>
        <taxon>Bacillati</taxon>
        <taxon>Cyanobacteriota</taxon>
        <taxon>Cyanophyceae</taxon>
        <taxon>Synechococcales</taxon>
        <taxon>Prochlorococcaceae</taxon>
        <taxon>Prochlorococcus</taxon>
    </lineage>
</organism>
<proteinExistence type="inferred from homology"/>
<keyword id="KW-0963">Cytoplasm</keyword>
<keyword id="KW-0378">Hydrolase</keyword>
<keyword id="KW-0540">Nuclease</keyword>
<keyword id="KW-0690">Ribosome biogenesis</keyword>
<sequence length="151" mass="17248">MKYSKPKSKSILSLDIGTKRIGLAYCDSLFITVNILPALRREKNKNEFKTIKSHIKKLNLTGFIVGLPLDDKGRMTSQAFDCKTYGEYLFNELKLPFSFVNEHSSTWESENRFGVKKDKSGLIDSLSAKVILEQWIQEGPELKELMGNKQI</sequence>
<feature type="chain" id="PRO_1000061553" description="Putative pre-16S rRNA nuclease">
    <location>
        <begin position="1"/>
        <end position="151"/>
    </location>
</feature>
<evidence type="ECO:0000255" key="1">
    <source>
        <dbReference type="HAMAP-Rule" id="MF_00651"/>
    </source>
</evidence>
<comment type="function">
    <text evidence="1">Could be a nuclease involved in processing of the 5'-end of pre-16S rRNA.</text>
</comment>
<comment type="subcellular location">
    <subcellularLocation>
        <location evidence="1">Cytoplasm</location>
    </subcellularLocation>
</comment>
<comment type="similarity">
    <text evidence="1">Belongs to the YqgF nuclease family.</text>
</comment>